<feature type="chain" id="PRO_1000040461" description="6,7-dimethyl-8-ribityllumazine synthase">
    <location>
        <begin position="1"/>
        <end position="158"/>
    </location>
</feature>
<feature type="active site" description="Proton donor" evidence="1">
    <location>
        <position position="88"/>
    </location>
</feature>
<feature type="binding site" evidence="1">
    <location>
        <position position="22"/>
    </location>
    <ligand>
        <name>5-amino-6-(D-ribitylamino)uracil</name>
        <dbReference type="ChEBI" id="CHEBI:15934"/>
    </ligand>
</feature>
<feature type="binding site" evidence="1">
    <location>
        <begin position="56"/>
        <end position="58"/>
    </location>
    <ligand>
        <name>5-amino-6-(D-ribitylamino)uracil</name>
        <dbReference type="ChEBI" id="CHEBI:15934"/>
    </ligand>
</feature>
<feature type="binding site" evidence="1">
    <location>
        <begin position="80"/>
        <end position="82"/>
    </location>
    <ligand>
        <name>5-amino-6-(D-ribitylamino)uracil</name>
        <dbReference type="ChEBI" id="CHEBI:15934"/>
    </ligand>
</feature>
<feature type="binding site" evidence="1">
    <location>
        <begin position="85"/>
        <end position="86"/>
    </location>
    <ligand>
        <name>(2S)-2-hydroxy-3-oxobutyl phosphate</name>
        <dbReference type="ChEBI" id="CHEBI:58830"/>
    </ligand>
</feature>
<feature type="binding site" evidence="1">
    <location>
        <position position="113"/>
    </location>
    <ligand>
        <name>5-amino-6-(D-ribitylamino)uracil</name>
        <dbReference type="ChEBI" id="CHEBI:15934"/>
    </ligand>
</feature>
<feature type="binding site" evidence="1">
    <location>
        <position position="127"/>
    </location>
    <ligand>
        <name>(2S)-2-hydroxy-3-oxobutyl phosphate</name>
        <dbReference type="ChEBI" id="CHEBI:58830"/>
    </ligand>
</feature>
<organism>
    <name type="scientific">Neisseria gonorrhoeae (strain ATCC 700825 / FA 1090)</name>
    <dbReference type="NCBI Taxonomy" id="242231"/>
    <lineage>
        <taxon>Bacteria</taxon>
        <taxon>Pseudomonadati</taxon>
        <taxon>Pseudomonadota</taxon>
        <taxon>Betaproteobacteria</taxon>
        <taxon>Neisseriales</taxon>
        <taxon>Neisseriaceae</taxon>
        <taxon>Neisseria</taxon>
    </lineage>
</organism>
<evidence type="ECO:0000255" key="1">
    <source>
        <dbReference type="HAMAP-Rule" id="MF_00178"/>
    </source>
</evidence>
<dbReference type="EC" id="2.5.1.78" evidence="1"/>
<dbReference type="EMBL" id="AE004969">
    <property type="protein sequence ID" value="AAW89008.1"/>
    <property type="molecule type" value="Genomic_DNA"/>
</dbReference>
<dbReference type="RefSeq" id="WP_003687601.1">
    <property type="nucleotide sequence ID" value="NC_002946.2"/>
</dbReference>
<dbReference type="RefSeq" id="YP_207420.1">
    <property type="nucleotide sequence ID" value="NC_002946.2"/>
</dbReference>
<dbReference type="SMR" id="Q5F9X9"/>
<dbReference type="STRING" id="242231.NGO_0257"/>
<dbReference type="GeneID" id="66752592"/>
<dbReference type="KEGG" id="ngo:NGO_0257"/>
<dbReference type="PATRIC" id="fig|242231.10.peg.316"/>
<dbReference type="HOGENOM" id="CLU_089358_1_2_4"/>
<dbReference type="UniPathway" id="UPA00275">
    <property type="reaction ID" value="UER00404"/>
</dbReference>
<dbReference type="Proteomes" id="UP000000535">
    <property type="component" value="Chromosome"/>
</dbReference>
<dbReference type="GO" id="GO:0005829">
    <property type="term" value="C:cytosol"/>
    <property type="evidence" value="ECO:0007669"/>
    <property type="project" value="TreeGrafter"/>
</dbReference>
<dbReference type="GO" id="GO:0009349">
    <property type="term" value="C:riboflavin synthase complex"/>
    <property type="evidence" value="ECO:0007669"/>
    <property type="project" value="InterPro"/>
</dbReference>
<dbReference type="GO" id="GO:0000906">
    <property type="term" value="F:6,7-dimethyl-8-ribityllumazine synthase activity"/>
    <property type="evidence" value="ECO:0007669"/>
    <property type="project" value="UniProtKB-UniRule"/>
</dbReference>
<dbReference type="GO" id="GO:0009231">
    <property type="term" value="P:riboflavin biosynthetic process"/>
    <property type="evidence" value="ECO:0007669"/>
    <property type="project" value="UniProtKB-UniRule"/>
</dbReference>
<dbReference type="CDD" id="cd09209">
    <property type="entry name" value="Lumazine_synthase-I"/>
    <property type="match status" value="1"/>
</dbReference>
<dbReference type="Gene3D" id="3.40.50.960">
    <property type="entry name" value="Lumazine/riboflavin synthase"/>
    <property type="match status" value="1"/>
</dbReference>
<dbReference type="HAMAP" id="MF_00178">
    <property type="entry name" value="Lumazine_synth"/>
    <property type="match status" value="1"/>
</dbReference>
<dbReference type="InterPro" id="IPR034964">
    <property type="entry name" value="LS"/>
</dbReference>
<dbReference type="InterPro" id="IPR002180">
    <property type="entry name" value="LS/RS"/>
</dbReference>
<dbReference type="InterPro" id="IPR036467">
    <property type="entry name" value="LS/RS_sf"/>
</dbReference>
<dbReference type="NCBIfam" id="TIGR00114">
    <property type="entry name" value="lumazine-synth"/>
    <property type="match status" value="1"/>
</dbReference>
<dbReference type="PANTHER" id="PTHR21058:SF0">
    <property type="entry name" value="6,7-DIMETHYL-8-RIBITYLLUMAZINE SYNTHASE"/>
    <property type="match status" value="1"/>
</dbReference>
<dbReference type="PANTHER" id="PTHR21058">
    <property type="entry name" value="6,7-DIMETHYL-8-RIBITYLLUMAZINE SYNTHASE DMRL SYNTHASE LUMAZINE SYNTHASE"/>
    <property type="match status" value="1"/>
</dbReference>
<dbReference type="Pfam" id="PF00885">
    <property type="entry name" value="DMRL_synthase"/>
    <property type="match status" value="1"/>
</dbReference>
<dbReference type="SUPFAM" id="SSF52121">
    <property type="entry name" value="Lumazine synthase"/>
    <property type="match status" value="1"/>
</dbReference>
<keyword id="KW-1185">Reference proteome</keyword>
<keyword id="KW-0686">Riboflavin biosynthesis</keyword>
<keyword id="KW-0808">Transferase</keyword>
<gene>
    <name evidence="1" type="primary">ribH</name>
    <name type="ordered locus">NGO_0257</name>
</gene>
<accession>Q5F9X9</accession>
<proteinExistence type="inferred from homology"/>
<reference key="1">
    <citation type="submission" date="2003-03" db="EMBL/GenBank/DDBJ databases">
        <title>The complete genome sequence of Neisseria gonorrhoeae.</title>
        <authorList>
            <person name="Lewis L.A."/>
            <person name="Gillaspy A.F."/>
            <person name="McLaughlin R.E."/>
            <person name="Gipson M."/>
            <person name="Ducey T.F."/>
            <person name="Ownbey T."/>
            <person name="Hartman K."/>
            <person name="Nydick C."/>
            <person name="Carson M.B."/>
            <person name="Vaughn J."/>
            <person name="Thomson C."/>
            <person name="Song L."/>
            <person name="Lin S."/>
            <person name="Yuan X."/>
            <person name="Najar F."/>
            <person name="Zhan M."/>
            <person name="Ren Q."/>
            <person name="Zhu H."/>
            <person name="Qi S."/>
            <person name="Kenton S.M."/>
            <person name="Lai H."/>
            <person name="White J.D."/>
            <person name="Clifton S."/>
            <person name="Roe B.A."/>
            <person name="Dyer D.W."/>
        </authorList>
    </citation>
    <scope>NUCLEOTIDE SEQUENCE [LARGE SCALE GENOMIC DNA]</scope>
    <source>
        <strain>ATCC 700825 / FA 1090</strain>
    </source>
</reference>
<name>RISB_NEIG1</name>
<protein>
    <recommendedName>
        <fullName evidence="1">6,7-dimethyl-8-ribityllumazine synthase</fullName>
        <shortName evidence="1">DMRL synthase</shortName>
        <shortName evidence="1">LS</shortName>
        <shortName evidence="1">Lumazine synthase</shortName>
        <ecNumber evidence="1">2.5.1.78</ecNumber>
    </recommendedName>
</protein>
<sequence length="158" mass="16968">MNTIAPNLDGKHLRIGIVQARFTNEIGSQMLKVCCRTLQELGVADENITVATVPGALEIPIALMNFASSEKFDALIAIGVVIRGETYHFELVANESGAGIGRVALDYNIPIANAVLTTENDAQAIERIGEKASDAAKVAVECANLVNLLLEEQFEDEE</sequence>
<comment type="function">
    <text evidence="1">Catalyzes the formation of 6,7-dimethyl-8-ribityllumazine by condensation of 5-amino-6-(D-ribitylamino)uracil with 3,4-dihydroxy-2-butanone 4-phosphate. This is the penultimate step in the biosynthesis of riboflavin.</text>
</comment>
<comment type="catalytic activity">
    <reaction evidence="1">
        <text>(2S)-2-hydroxy-3-oxobutyl phosphate + 5-amino-6-(D-ribitylamino)uracil = 6,7-dimethyl-8-(1-D-ribityl)lumazine + phosphate + 2 H2O + H(+)</text>
        <dbReference type="Rhea" id="RHEA:26152"/>
        <dbReference type="ChEBI" id="CHEBI:15377"/>
        <dbReference type="ChEBI" id="CHEBI:15378"/>
        <dbReference type="ChEBI" id="CHEBI:15934"/>
        <dbReference type="ChEBI" id="CHEBI:43474"/>
        <dbReference type="ChEBI" id="CHEBI:58201"/>
        <dbReference type="ChEBI" id="CHEBI:58830"/>
        <dbReference type="EC" id="2.5.1.78"/>
    </reaction>
</comment>
<comment type="pathway">
    <text evidence="1">Cofactor biosynthesis; riboflavin biosynthesis; riboflavin from 2-hydroxy-3-oxobutyl phosphate and 5-amino-6-(D-ribitylamino)uracil: step 1/2.</text>
</comment>
<comment type="similarity">
    <text evidence="1">Belongs to the DMRL synthase family.</text>
</comment>